<protein>
    <recommendedName>
        <fullName>Uncharacterized protein YeeT</fullName>
    </recommendedName>
</protein>
<sequence length="73" mass="8411">MKIITRGEAMRIHQQHPTSRLFPFCTGKYRWHGSAEAYTGREVQDIPGVLAVFAERRKDSFGPYVRLMSVTLN</sequence>
<evidence type="ECO:0000305" key="1"/>
<feature type="chain" id="PRO_0000169112" description="Uncharacterized protein YeeT">
    <location>
        <begin position="1"/>
        <end position="73"/>
    </location>
</feature>
<reference key="1">
    <citation type="journal article" date="1997" name="Science">
        <title>The complete genome sequence of Escherichia coli K-12.</title>
        <authorList>
            <person name="Blattner F.R."/>
            <person name="Plunkett G. III"/>
            <person name="Bloch C.A."/>
            <person name="Perna N.T."/>
            <person name="Burland V."/>
            <person name="Riley M."/>
            <person name="Collado-Vides J."/>
            <person name="Glasner J.D."/>
            <person name="Rode C.K."/>
            <person name="Mayhew G.F."/>
            <person name="Gregor J."/>
            <person name="Davis N.W."/>
            <person name="Kirkpatrick H.A."/>
            <person name="Goeden M.A."/>
            <person name="Rose D.J."/>
            <person name="Mau B."/>
            <person name="Shao Y."/>
        </authorList>
    </citation>
    <scope>NUCLEOTIDE SEQUENCE [LARGE SCALE GENOMIC DNA]</scope>
    <source>
        <strain>K12 / MG1655 / ATCC 47076</strain>
    </source>
</reference>
<reference key="2">
    <citation type="journal article" date="2006" name="Mol. Syst. Biol.">
        <title>Highly accurate genome sequences of Escherichia coli K-12 strains MG1655 and W3110.</title>
        <authorList>
            <person name="Hayashi K."/>
            <person name="Morooka N."/>
            <person name="Yamamoto Y."/>
            <person name="Fujita K."/>
            <person name="Isono K."/>
            <person name="Choi S."/>
            <person name="Ohtsubo E."/>
            <person name="Baba T."/>
            <person name="Wanner B.L."/>
            <person name="Mori H."/>
            <person name="Horiuchi T."/>
        </authorList>
    </citation>
    <scope>NUCLEOTIDE SEQUENCE [LARGE SCALE GENOMIC DNA]</scope>
    <source>
        <strain>K12 / W3110 / ATCC 27325 / DSM 5911</strain>
    </source>
</reference>
<comment type="similarity">
    <text evidence="1">Belongs to the YeeT/YkfH/YpjJ family.</text>
</comment>
<proteinExistence type="inferred from homology"/>
<organism>
    <name type="scientific">Escherichia coli (strain K12)</name>
    <dbReference type="NCBI Taxonomy" id="83333"/>
    <lineage>
        <taxon>Bacteria</taxon>
        <taxon>Pseudomonadati</taxon>
        <taxon>Pseudomonadota</taxon>
        <taxon>Gammaproteobacteria</taxon>
        <taxon>Enterobacterales</taxon>
        <taxon>Enterobacteriaceae</taxon>
        <taxon>Escherichia</taxon>
    </lineage>
</organism>
<gene>
    <name type="primary">yeeT</name>
    <name type="ordered locus">b2003</name>
    <name type="ordered locus">JW1985</name>
</gene>
<keyword id="KW-1185">Reference proteome</keyword>
<dbReference type="EMBL" id="U00096">
    <property type="protein sequence ID" value="AAC75064.1"/>
    <property type="molecule type" value="Genomic_DNA"/>
</dbReference>
<dbReference type="EMBL" id="AP009048">
    <property type="protein sequence ID" value="BAE76564.1"/>
    <property type="molecule type" value="Genomic_DNA"/>
</dbReference>
<dbReference type="PIR" id="B64965">
    <property type="entry name" value="B64965"/>
</dbReference>
<dbReference type="RefSeq" id="NP_416507.1">
    <property type="nucleotide sequence ID" value="NC_000913.3"/>
</dbReference>
<dbReference type="RefSeq" id="WP_000692323.1">
    <property type="nucleotide sequence ID" value="NZ_SSUU01000024.1"/>
</dbReference>
<dbReference type="BioGRID" id="4259163">
    <property type="interactions" value="12"/>
</dbReference>
<dbReference type="FunCoup" id="P64521">
    <property type="interactions" value="92"/>
</dbReference>
<dbReference type="IntAct" id="P64521">
    <property type="interactions" value="6"/>
</dbReference>
<dbReference type="STRING" id="511145.b2003"/>
<dbReference type="PaxDb" id="511145-b2003"/>
<dbReference type="EnsemblBacteria" id="AAC75064">
    <property type="protein sequence ID" value="AAC75064"/>
    <property type="gene ID" value="b2003"/>
</dbReference>
<dbReference type="GeneID" id="946513"/>
<dbReference type="KEGG" id="ecj:JW1985"/>
<dbReference type="KEGG" id="eco:b2003"/>
<dbReference type="KEGG" id="ecoc:C3026_11295"/>
<dbReference type="PATRIC" id="fig|511145.12.peg.2079"/>
<dbReference type="EchoBASE" id="EB3168"/>
<dbReference type="eggNOG" id="ENOG50333DH">
    <property type="taxonomic scope" value="Bacteria"/>
</dbReference>
<dbReference type="HOGENOM" id="CLU_201031_0_0_6"/>
<dbReference type="InParanoid" id="P64521"/>
<dbReference type="OMA" id="GEAMHIH"/>
<dbReference type="OrthoDB" id="6428729at2"/>
<dbReference type="PhylomeDB" id="P64521"/>
<dbReference type="BioCyc" id="EcoCyc:G7083-MONOMER"/>
<dbReference type="PRO" id="PR:P64521"/>
<dbReference type="Proteomes" id="UP000000625">
    <property type="component" value="Chromosome"/>
</dbReference>
<dbReference type="InterPro" id="IPR009329">
    <property type="entry name" value="DUF987"/>
</dbReference>
<dbReference type="Pfam" id="PF06174">
    <property type="entry name" value="DUF987"/>
    <property type="match status" value="1"/>
</dbReference>
<accession>P64521</accession>
<accession>P76363</accession>
<accession>Q2MAZ2</accession>
<name>YEET_ECOLI</name>